<feature type="chain" id="PRO_1000148963" description="1-(5-phosphoribosyl)-5-[(5-phosphoribosylamino)methylideneamino] imidazole-4-carboxamide isomerase">
    <location>
        <begin position="1"/>
        <end position="236"/>
    </location>
</feature>
<feature type="active site" description="Proton acceptor" evidence="1">
    <location>
        <position position="8"/>
    </location>
</feature>
<feature type="active site" description="Proton donor" evidence="1">
    <location>
        <position position="129"/>
    </location>
</feature>
<evidence type="ECO:0000255" key="1">
    <source>
        <dbReference type="HAMAP-Rule" id="MF_01014"/>
    </source>
</evidence>
<sequence>MIIYPAIDIIDGKCVRLQQGSYSDVTVFGDSPVDMARKWESLGAGYLHVVDLDGARSGKSENAEIIKQIAKTLKIPVQTGGGIRNLETVETYLSGGLSRIILGTSAVSNREMLISALKEYKGKIAVGIDAKDGKVAIHGWEKTSDYTAVEFAKEVESLGAKTIIYTDISRDGMLKGPNLQAMKEMADSVSMDVIASGGVSRLKDIIDLKQTGVSGVIVGKAIYTGNVDLKEAILAI</sequence>
<protein>
    <recommendedName>
        <fullName evidence="1">1-(5-phosphoribosyl)-5-[(5-phosphoribosylamino)methylideneamino] imidazole-4-carboxamide isomerase</fullName>
        <ecNumber evidence="1">5.3.1.16</ecNumber>
    </recommendedName>
    <alternativeName>
        <fullName evidence="1">Phosphoribosylformimino-5-aminoimidazole carboxamide ribotide isomerase</fullName>
    </alternativeName>
</protein>
<gene>
    <name evidence="1" type="primary">hisA</name>
    <name type="ordered locus">Ccel_0387</name>
</gene>
<keyword id="KW-0028">Amino-acid biosynthesis</keyword>
<keyword id="KW-0963">Cytoplasm</keyword>
<keyword id="KW-0368">Histidine biosynthesis</keyword>
<keyword id="KW-0413">Isomerase</keyword>
<keyword id="KW-1185">Reference proteome</keyword>
<organism>
    <name type="scientific">Ruminiclostridium cellulolyticum (strain ATCC 35319 / DSM 5812 / JCM 6584 / H10)</name>
    <name type="common">Clostridium cellulolyticum</name>
    <dbReference type="NCBI Taxonomy" id="394503"/>
    <lineage>
        <taxon>Bacteria</taxon>
        <taxon>Bacillati</taxon>
        <taxon>Bacillota</taxon>
        <taxon>Clostridia</taxon>
        <taxon>Eubacteriales</taxon>
        <taxon>Oscillospiraceae</taxon>
        <taxon>Ruminiclostridium</taxon>
    </lineage>
</organism>
<proteinExistence type="inferred from homology"/>
<dbReference type="EC" id="5.3.1.16" evidence="1"/>
<dbReference type="EMBL" id="CP001348">
    <property type="protein sequence ID" value="ACL74772.1"/>
    <property type="molecule type" value="Genomic_DNA"/>
</dbReference>
<dbReference type="RefSeq" id="WP_012634835.1">
    <property type="nucleotide sequence ID" value="NC_011898.1"/>
</dbReference>
<dbReference type="SMR" id="B8I5V5"/>
<dbReference type="STRING" id="394503.Ccel_0387"/>
<dbReference type="KEGG" id="cce:Ccel_0387"/>
<dbReference type="eggNOG" id="COG0106">
    <property type="taxonomic scope" value="Bacteria"/>
</dbReference>
<dbReference type="HOGENOM" id="CLU_048577_1_1_9"/>
<dbReference type="OrthoDB" id="9781903at2"/>
<dbReference type="UniPathway" id="UPA00031">
    <property type="reaction ID" value="UER00009"/>
</dbReference>
<dbReference type="Proteomes" id="UP000001349">
    <property type="component" value="Chromosome"/>
</dbReference>
<dbReference type="GO" id="GO:0005737">
    <property type="term" value="C:cytoplasm"/>
    <property type="evidence" value="ECO:0007669"/>
    <property type="project" value="UniProtKB-SubCell"/>
</dbReference>
<dbReference type="GO" id="GO:0003949">
    <property type="term" value="F:1-(5-phosphoribosyl)-5-[(5-phosphoribosylamino)methylideneamino]imidazole-4-carboxamide isomerase activity"/>
    <property type="evidence" value="ECO:0007669"/>
    <property type="project" value="UniProtKB-UniRule"/>
</dbReference>
<dbReference type="GO" id="GO:0000105">
    <property type="term" value="P:L-histidine biosynthetic process"/>
    <property type="evidence" value="ECO:0007669"/>
    <property type="project" value="UniProtKB-UniRule"/>
</dbReference>
<dbReference type="GO" id="GO:0000162">
    <property type="term" value="P:L-tryptophan biosynthetic process"/>
    <property type="evidence" value="ECO:0007669"/>
    <property type="project" value="TreeGrafter"/>
</dbReference>
<dbReference type="CDD" id="cd04732">
    <property type="entry name" value="HisA"/>
    <property type="match status" value="1"/>
</dbReference>
<dbReference type="FunFam" id="3.20.20.70:FF:000009">
    <property type="entry name" value="1-(5-phosphoribosyl)-5-[(5-phosphoribosylamino)methylideneamino] imidazole-4-carboxamide isomerase"/>
    <property type="match status" value="1"/>
</dbReference>
<dbReference type="Gene3D" id="3.20.20.70">
    <property type="entry name" value="Aldolase class I"/>
    <property type="match status" value="1"/>
</dbReference>
<dbReference type="HAMAP" id="MF_01014">
    <property type="entry name" value="HisA"/>
    <property type="match status" value="1"/>
</dbReference>
<dbReference type="InterPro" id="IPR013785">
    <property type="entry name" value="Aldolase_TIM"/>
</dbReference>
<dbReference type="InterPro" id="IPR006062">
    <property type="entry name" value="His_biosynth"/>
</dbReference>
<dbReference type="InterPro" id="IPR006063">
    <property type="entry name" value="HisA_bact_arch"/>
</dbReference>
<dbReference type="InterPro" id="IPR044524">
    <property type="entry name" value="Isoase_HisA-like"/>
</dbReference>
<dbReference type="InterPro" id="IPR023016">
    <property type="entry name" value="Isoase_HisA-like_bact"/>
</dbReference>
<dbReference type="InterPro" id="IPR011060">
    <property type="entry name" value="RibuloseP-bd_barrel"/>
</dbReference>
<dbReference type="NCBIfam" id="TIGR00007">
    <property type="entry name" value="1-(5-phosphoribosyl)-5-[(5-phosphoribosylamino)methylideneamino]imidazole-4-carboxamide isomerase"/>
    <property type="match status" value="1"/>
</dbReference>
<dbReference type="NCBIfam" id="NF010112">
    <property type="entry name" value="PRK13585.1"/>
    <property type="match status" value="1"/>
</dbReference>
<dbReference type="PANTHER" id="PTHR43090">
    <property type="entry name" value="1-(5-PHOSPHORIBOSYL)-5-[(5-PHOSPHORIBOSYLAMINO)METHYLIDENEAMINO] IMIDAZOLE-4-CARBOXAMIDE ISOMERASE"/>
    <property type="match status" value="1"/>
</dbReference>
<dbReference type="PANTHER" id="PTHR43090:SF2">
    <property type="entry name" value="1-(5-PHOSPHORIBOSYL)-5-[(5-PHOSPHORIBOSYLAMINO)METHYLIDENEAMINO] IMIDAZOLE-4-CARBOXAMIDE ISOMERASE"/>
    <property type="match status" value="1"/>
</dbReference>
<dbReference type="Pfam" id="PF00977">
    <property type="entry name" value="His_biosynth"/>
    <property type="match status" value="1"/>
</dbReference>
<dbReference type="SUPFAM" id="SSF51366">
    <property type="entry name" value="Ribulose-phoshate binding barrel"/>
    <property type="match status" value="1"/>
</dbReference>
<comment type="catalytic activity">
    <reaction evidence="1">
        <text>1-(5-phospho-beta-D-ribosyl)-5-[(5-phospho-beta-D-ribosylamino)methylideneamino]imidazole-4-carboxamide = 5-[(5-phospho-1-deoxy-D-ribulos-1-ylimino)methylamino]-1-(5-phospho-beta-D-ribosyl)imidazole-4-carboxamide</text>
        <dbReference type="Rhea" id="RHEA:15469"/>
        <dbReference type="ChEBI" id="CHEBI:58435"/>
        <dbReference type="ChEBI" id="CHEBI:58525"/>
        <dbReference type="EC" id="5.3.1.16"/>
    </reaction>
</comment>
<comment type="pathway">
    <text evidence="1">Amino-acid biosynthesis; L-histidine biosynthesis; L-histidine from 5-phospho-alpha-D-ribose 1-diphosphate: step 4/9.</text>
</comment>
<comment type="subcellular location">
    <subcellularLocation>
        <location evidence="1">Cytoplasm</location>
    </subcellularLocation>
</comment>
<comment type="similarity">
    <text evidence="1">Belongs to the HisA/HisF family.</text>
</comment>
<reference key="1">
    <citation type="submission" date="2009-01" db="EMBL/GenBank/DDBJ databases">
        <title>Complete sequence of Clostridium cellulolyticum H10.</title>
        <authorList>
            <consortium name="US DOE Joint Genome Institute"/>
            <person name="Lucas S."/>
            <person name="Copeland A."/>
            <person name="Lapidus A."/>
            <person name="Glavina del Rio T."/>
            <person name="Dalin E."/>
            <person name="Tice H."/>
            <person name="Bruce D."/>
            <person name="Goodwin L."/>
            <person name="Pitluck S."/>
            <person name="Chertkov O."/>
            <person name="Saunders E."/>
            <person name="Brettin T."/>
            <person name="Detter J.C."/>
            <person name="Han C."/>
            <person name="Larimer F."/>
            <person name="Land M."/>
            <person name="Hauser L."/>
            <person name="Kyrpides N."/>
            <person name="Ivanova N."/>
            <person name="Zhou J."/>
            <person name="Richardson P."/>
        </authorList>
    </citation>
    <scope>NUCLEOTIDE SEQUENCE [LARGE SCALE GENOMIC DNA]</scope>
    <source>
        <strain>ATCC 35319 / DSM 5812 / JCM 6584 / H10</strain>
    </source>
</reference>
<name>HIS4_RUMCH</name>
<accession>B8I5V5</accession>